<feature type="signal peptide" evidence="1">
    <location>
        <begin position="1"/>
        <end position="17"/>
    </location>
</feature>
<feature type="chain" id="PRO_0000278316" description="Efem/EfeO family lipoprotein">
    <location>
        <begin position="18"/>
        <end position="284"/>
    </location>
</feature>
<feature type="lipid moiety-binding region" description="N-palmitoyl cysteine" evidence="1">
    <location>
        <position position="18"/>
    </location>
</feature>
<feature type="lipid moiety-binding region" description="S-diacylglycerol cysteine" evidence="1">
    <location>
        <position position="18"/>
    </location>
</feature>
<keyword id="KW-1003">Cell membrane</keyword>
<keyword id="KW-0449">Lipoprotein</keyword>
<keyword id="KW-0472">Membrane</keyword>
<keyword id="KW-0564">Palmitate</keyword>
<keyword id="KW-1185">Reference proteome</keyword>
<keyword id="KW-0732">Signal</keyword>
<evidence type="ECO:0000255" key="1">
    <source>
        <dbReference type="PROSITE-ProRule" id="PRU00303"/>
    </source>
</evidence>
<evidence type="ECO:0000305" key="2"/>
<gene>
    <name type="ordered locus">SAOUHSC_00325</name>
</gene>
<name>EFEMO_STAA8</name>
<organism>
    <name type="scientific">Staphylococcus aureus (strain NCTC 8325 / PS 47)</name>
    <dbReference type="NCBI Taxonomy" id="93061"/>
    <lineage>
        <taxon>Bacteria</taxon>
        <taxon>Bacillati</taxon>
        <taxon>Bacillota</taxon>
        <taxon>Bacilli</taxon>
        <taxon>Bacillales</taxon>
        <taxon>Staphylococcaceae</taxon>
        <taxon>Staphylococcus</taxon>
    </lineage>
</organism>
<reference key="1">
    <citation type="book" date="2006" name="Gram positive pathogens, 2nd edition">
        <title>The Staphylococcus aureus NCTC 8325 genome.</title>
        <editorList>
            <person name="Fischetti V."/>
            <person name="Novick R."/>
            <person name="Ferretti J."/>
            <person name="Portnoy D."/>
            <person name="Rood J."/>
        </editorList>
        <authorList>
            <person name="Gillaspy A.F."/>
            <person name="Worrell V."/>
            <person name="Orvis J."/>
            <person name="Roe B.A."/>
            <person name="Dyer D.W."/>
            <person name="Iandolo J.J."/>
        </authorList>
    </citation>
    <scope>NUCLEOTIDE SEQUENCE [LARGE SCALE GENOMIC DNA]</scope>
    <source>
        <strain>NCTC 8325 / PS 47</strain>
    </source>
</reference>
<accession>Q2G131</accession>
<proteinExistence type="inferred from homology"/>
<protein>
    <recommendedName>
        <fullName>Efem/EfeO family lipoprotein</fullName>
    </recommendedName>
</protein>
<dbReference type="EMBL" id="CP000253">
    <property type="protein sequence ID" value="ABD29493.1"/>
    <property type="molecule type" value="Genomic_DNA"/>
</dbReference>
<dbReference type="RefSeq" id="YP_498914.1">
    <property type="nucleotide sequence ID" value="NC_007795.1"/>
</dbReference>
<dbReference type="SMR" id="Q2G131"/>
<dbReference type="STRING" id="93061.SAOUHSC_00325"/>
<dbReference type="PaxDb" id="1280-SAXN108_0392"/>
<dbReference type="GeneID" id="3919590"/>
<dbReference type="KEGG" id="sao:SAOUHSC_00325"/>
<dbReference type="PATRIC" id="fig|93061.5.peg.296"/>
<dbReference type="eggNOG" id="COG2822">
    <property type="taxonomic scope" value="Bacteria"/>
</dbReference>
<dbReference type="HOGENOM" id="CLU_050342_0_1_9"/>
<dbReference type="OrthoDB" id="7348379at2"/>
<dbReference type="PRO" id="PR:Q2G131"/>
<dbReference type="Proteomes" id="UP000008816">
    <property type="component" value="Chromosome"/>
</dbReference>
<dbReference type="GO" id="GO:0005886">
    <property type="term" value="C:plasma membrane"/>
    <property type="evidence" value="ECO:0007669"/>
    <property type="project" value="UniProtKB-SubCell"/>
</dbReference>
<dbReference type="CDD" id="cd14656">
    <property type="entry name" value="Imelysin-like_EfeO"/>
    <property type="match status" value="1"/>
</dbReference>
<dbReference type="Gene3D" id="1.20.1420.20">
    <property type="entry name" value="M75 peptidase, HXXE motif"/>
    <property type="match status" value="1"/>
</dbReference>
<dbReference type="InterPro" id="IPR050894">
    <property type="entry name" value="EfeM/EfeO_iron_uptake"/>
</dbReference>
<dbReference type="InterPro" id="IPR018976">
    <property type="entry name" value="Imelysin-like"/>
</dbReference>
<dbReference type="InterPro" id="IPR034981">
    <property type="entry name" value="Imelysin-like_EfeO/Algp7"/>
</dbReference>
<dbReference type="InterPro" id="IPR038352">
    <property type="entry name" value="Imelysin_sf"/>
</dbReference>
<dbReference type="InterPro" id="IPR053377">
    <property type="entry name" value="Iron_uptake_EfeM/EfeO"/>
</dbReference>
<dbReference type="NCBIfam" id="NF041757">
    <property type="entry name" value="EfeO"/>
    <property type="match status" value="1"/>
</dbReference>
<dbReference type="PANTHER" id="PTHR39192">
    <property type="entry name" value="IRON UPTAKE SYSTEM COMPONENT EFEO"/>
    <property type="match status" value="1"/>
</dbReference>
<dbReference type="PANTHER" id="PTHR39192:SF1">
    <property type="entry name" value="IRON UPTAKE SYSTEM COMPONENT EFEO"/>
    <property type="match status" value="1"/>
</dbReference>
<dbReference type="Pfam" id="PF09375">
    <property type="entry name" value="Peptidase_M75"/>
    <property type="match status" value="1"/>
</dbReference>
<dbReference type="PROSITE" id="PS51257">
    <property type="entry name" value="PROKAR_LIPOPROTEIN"/>
    <property type="match status" value="1"/>
</dbReference>
<sequence length="284" mass="32247">MKKLTTLLLASTLLIAACGNDDSKKDDSKTSKKDDGVKAELKQATKAYDKYTDEQLNEFLKGTEKFVKAIENNDMAQAKALYPKVRMYYERSEPVAEAFGDLDPKIDARLADMKEEKKEKEWSGYHKIEKALYEDKKIDDVTKKDAQQLLKDAKELHAKADTLDITPKLMLQGSVDLLNEVATSKITGEEEIYSHTDLYDFKANVEGAQKIYDLFKPILEKKDKKLSDDIQMNFDKVNQLLDKYKDNNGGYESFEKVSKKDRKAFADAVNALGEPLSKMAVITE</sequence>
<comment type="subcellular location">
    <subcellularLocation>
        <location evidence="1">Cell membrane</location>
        <topology evidence="1">Lipid-anchor</topology>
    </subcellularLocation>
</comment>
<comment type="similarity">
    <text evidence="2">Belongs to the EfeM/EfeO family.</text>
</comment>